<gene>
    <name type="primary">Ubxn1</name>
    <name type="synonym">Saks1</name>
</gene>
<proteinExistence type="inferred from homology"/>
<protein>
    <recommendedName>
        <fullName>UBX domain-containing protein 1</fullName>
    </recommendedName>
    <alternativeName>
        <fullName>SAPK substrate protein 1</fullName>
    </alternativeName>
</protein>
<feature type="initiator methionine" description="Removed" evidence="2">
    <location>
        <position position="1"/>
    </location>
</feature>
<feature type="chain" id="PRO_0000248998" description="UBX domain-containing protein 1">
    <location>
        <begin position="2"/>
        <end position="297"/>
    </location>
</feature>
<feature type="domain" description="UBA" evidence="4">
    <location>
        <begin position="2"/>
        <end position="42"/>
    </location>
</feature>
<feature type="domain" description="UBX" evidence="5">
    <location>
        <begin position="209"/>
        <end position="291"/>
    </location>
</feature>
<feature type="region of interest" description="Disordered" evidence="6">
    <location>
        <begin position="38"/>
        <end position="212"/>
    </location>
</feature>
<feature type="region of interest" description="Interaction with BRCA1" evidence="1">
    <location>
        <begin position="43"/>
        <end position="297"/>
    </location>
</feature>
<feature type="coiled-coil region" evidence="3">
    <location>
        <begin position="86"/>
        <end position="172"/>
    </location>
</feature>
<feature type="compositionally biased region" description="Acidic residues" evidence="6">
    <location>
        <begin position="42"/>
        <end position="52"/>
    </location>
</feature>
<feature type="compositionally biased region" description="Basic and acidic residues" evidence="6">
    <location>
        <begin position="86"/>
        <end position="122"/>
    </location>
</feature>
<feature type="compositionally biased region" description="Basic and acidic residues" evidence="6">
    <location>
        <begin position="137"/>
        <end position="177"/>
    </location>
</feature>
<feature type="modified residue" description="N-acetylalanine" evidence="2">
    <location>
        <position position="2"/>
    </location>
</feature>
<feature type="modified residue" description="Phosphoserine" evidence="2">
    <location>
        <position position="199"/>
    </location>
</feature>
<feature type="modified residue" description="Phosphoserine; by MAPK12" evidence="2">
    <location>
        <position position="200"/>
    </location>
</feature>
<feature type="modified residue" description="Phosphothreonine" evidence="2">
    <location>
        <position position="207"/>
    </location>
</feature>
<feature type="modified residue" description="Phosphothreonine" evidence="2">
    <location>
        <position position="229"/>
    </location>
</feature>
<feature type="modified residue" description="Phosphoserine" evidence="2">
    <location>
        <position position="270"/>
    </location>
</feature>
<organism>
    <name type="scientific">Rattus norvegicus</name>
    <name type="common">Rat</name>
    <dbReference type="NCBI Taxonomy" id="10116"/>
    <lineage>
        <taxon>Eukaryota</taxon>
        <taxon>Metazoa</taxon>
        <taxon>Chordata</taxon>
        <taxon>Craniata</taxon>
        <taxon>Vertebrata</taxon>
        <taxon>Euteleostomi</taxon>
        <taxon>Mammalia</taxon>
        <taxon>Eutheria</taxon>
        <taxon>Euarchontoglires</taxon>
        <taxon>Glires</taxon>
        <taxon>Rodentia</taxon>
        <taxon>Myomorpha</taxon>
        <taxon>Muroidea</taxon>
        <taxon>Muridae</taxon>
        <taxon>Murinae</taxon>
        <taxon>Rattus</taxon>
    </lineage>
</organism>
<comment type="function">
    <text evidence="1">Ubiquitin-binding protein that interacts with the BRCA1-BARD1 heterodimer, and regulates its activity. Specifically binds 'Lys-6'-linked polyubiquitin chains. Interaction with autoubiquitinated BRCA1, leads to inhibit the E3 ubiquitin-protein ligase activity of the BRCA1-BARD1 heterodimer. Component of a complex required to couple deglycosylation and proteasome-mediated degradation of misfolded proteins in the endoplasmic reticulum that are retrotranslocated in the cytosol (By similarity).</text>
</comment>
<comment type="subunit">
    <text evidence="1">Component of a complex required to couple retrotranslocation, ubiquitination and deglycosylation composed of NGLY1, SAKS1, AMFR, VCP and RAD23B. Interacts with HOMER2 (By similarity). Interacts directly with VCP. Interacts with BRCA1 and BARD1; interaction takes place when BRCA1 is not autoubiquitinated bur is strongly enhanced in the presence of autoubiquitinated BRCA1 (By similarity).</text>
</comment>
<comment type="subcellular location">
    <subcellularLocation>
        <location evidence="1">Cytoplasm</location>
    </subcellularLocation>
</comment>
<comment type="domain">
    <text evidence="1">The UBA domain specifically recognizes and binds 'Lys-6'-linked polyubiquitin chains.</text>
</comment>
<reference key="1">
    <citation type="journal article" date="2004" name="Nature">
        <title>Genome sequence of the Brown Norway rat yields insights into mammalian evolution.</title>
        <authorList>
            <person name="Gibbs R.A."/>
            <person name="Weinstock G.M."/>
            <person name="Metzker M.L."/>
            <person name="Muzny D.M."/>
            <person name="Sodergren E.J."/>
            <person name="Scherer S."/>
            <person name="Scott G."/>
            <person name="Steffen D."/>
            <person name="Worley K.C."/>
            <person name="Burch P.E."/>
            <person name="Okwuonu G."/>
            <person name="Hines S."/>
            <person name="Lewis L."/>
            <person name="Deramo C."/>
            <person name="Delgado O."/>
            <person name="Dugan-Rocha S."/>
            <person name="Miner G."/>
            <person name="Morgan M."/>
            <person name="Hawes A."/>
            <person name="Gill R."/>
            <person name="Holt R.A."/>
            <person name="Adams M.D."/>
            <person name="Amanatides P.G."/>
            <person name="Baden-Tillson H."/>
            <person name="Barnstead M."/>
            <person name="Chin S."/>
            <person name="Evans C.A."/>
            <person name="Ferriera S."/>
            <person name="Fosler C."/>
            <person name="Glodek A."/>
            <person name="Gu Z."/>
            <person name="Jennings D."/>
            <person name="Kraft C.L."/>
            <person name="Nguyen T."/>
            <person name="Pfannkoch C.M."/>
            <person name="Sitter C."/>
            <person name="Sutton G.G."/>
            <person name="Venter J.C."/>
            <person name="Woodage T."/>
            <person name="Smith D."/>
            <person name="Lee H.-M."/>
            <person name="Gustafson E."/>
            <person name="Cahill P."/>
            <person name="Kana A."/>
            <person name="Doucette-Stamm L."/>
            <person name="Weinstock K."/>
            <person name="Fechtel K."/>
            <person name="Weiss R.B."/>
            <person name="Dunn D.M."/>
            <person name="Green E.D."/>
            <person name="Blakesley R.W."/>
            <person name="Bouffard G.G."/>
            <person name="De Jong P.J."/>
            <person name="Osoegawa K."/>
            <person name="Zhu B."/>
            <person name="Marra M."/>
            <person name="Schein J."/>
            <person name="Bosdet I."/>
            <person name="Fjell C."/>
            <person name="Jones S."/>
            <person name="Krzywinski M."/>
            <person name="Mathewson C."/>
            <person name="Siddiqui A."/>
            <person name="Wye N."/>
            <person name="McPherson J."/>
            <person name="Zhao S."/>
            <person name="Fraser C.M."/>
            <person name="Shetty J."/>
            <person name="Shatsman S."/>
            <person name="Geer K."/>
            <person name="Chen Y."/>
            <person name="Abramzon S."/>
            <person name="Nierman W.C."/>
            <person name="Havlak P.H."/>
            <person name="Chen R."/>
            <person name="Durbin K.J."/>
            <person name="Egan A."/>
            <person name="Ren Y."/>
            <person name="Song X.-Z."/>
            <person name="Li B."/>
            <person name="Liu Y."/>
            <person name="Qin X."/>
            <person name="Cawley S."/>
            <person name="Cooney A.J."/>
            <person name="D'Souza L.M."/>
            <person name="Martin K."/>
            <person name="Wu J.Q."/>
            <person name="Gonzalez-Garay M.L."/>
            <person name="Jackson A.R."/>
            <person name="Kalafus K.J."/>
            <person name="McLeod M.P."/>
            <person name="Milosavljevic A."/>
            <person name="Virk D."/>
            <person name="Volkov A."/>
            <person name="Wheeler D.A."/>
            <person name="Zhang Z."/>
            <person name="Bailey J.A."/>
            <person name="Eichler E.E."/>
            <person name="Tuzun E."/>
            <person name="Birney E."/>
            <person name="Mongin E."/>
            <person name="Ureta-Vidal A."/>
            <person name="Woodwark C."/>
            <person name="Zdobnov E."/>
            <person name="Bork P."/>
            <person name="Suyama M."/>
            <person name="Torrents D."/>
            <person name="Alexandersson M."/>
            <person name="Trask B.J."/>
            <person name="Young J.M."/>
            <person name="Huang H."/>
            <person name="Wang H."/>
            <person name="Xing H."/>
            <person name="Daniels S."/>
            <person name="Gietzen D."/>
            <person name="Schmidt J."/>
            <person name="Stevens K."/>
            <person name="Vitt U."/>
            <person name="Wingrove J."/>
            <person name="Camara F."/>
            <person name="Mar Alba M."/>
            <person name="Abril J.F."/>
            <person name="Guigo R."/>
            <person name="Smit A."/>
            <person name="Dubchak I."/>
            <person name="Rubin E.M."/>
            <person name="Couronne O."/>
            <person name="Poliakov A."/>
            <person name="Huebner N."/>
            <person name="Ganten D."/>
            <person name="Goesele C."/>
            <person name="Hummel O."/>
            <person name="Kreitler T."/>
            <person name="Lee Y.-A."/>
            <person name="Monti J."/>
            <person name="Schulz H."/>
            <person name="Zimdahl H."/>
            <person name="Himmelbauer H."/>
            <person name="Lehrach H."/>
            <person name="Jacob H.J."/>
            <person name="Bromberg S."/>
            <person name="Gullings-Handley J."/>
            <person name="Jensen-Seaman M.I."/>
            <person name="Kwitek A.E."/>
            <person name="Lazar J."/>
            <person name="Pasko D."/>
            <person name="Tonellato P.J."/>
            <person name="Twigger S."/>
            <person name="Ponting C.P."/>
            <person name="Duarte J.M."/>
            <person name="Rice S."/>
            <person name="Goodstadt L."/>
            <person name="Beatson S.A."/>
            <person name="Emes R.D."/>
            <person name="Winter E.E."/>
            <person name="Webber C."/>
            <person name="Brandt P."/>
            <person name="Nyakatura G."/>
            <person name="Adetobi M."/>
            <person name="Chiaromonte F."/>
            <person name="Elnitski L."/>
            <person name="Eswara P."/>
            <person name="Hardison R.C."/>
            <person name="Hou M."/>
            <person name="Kolbe D."/>
            <person name="Makova K."/>
            <person name="Miller W."/>
            <person name="Nekrutenko A."/>
            <person name="Riemer C."/>
            <person name="Schwartz S."/>
            <person name="Taylor J."/>
            <person name="Yang S."/>
            <person name="Zhang Y."/>
            <person name="Lindpaintner K."/>
            <person name="Andrews T.D."/>
            <person name="Caccamo M."/>
            <person name="Clamp M."/>
            <person name="Clarke L."/>
            <person name="Curwen V."/>
            <person name="Durbin R.M."/>
            <person name="Eyras E."/>
            <person name="Searle S.M."/>
            <person name="Cooper G.M."/>
            <person name="Batzoglou S."/>
            <person name="Brudno M."/>
            <person name="Sidow A."/>
            <person name="Stone E.A."/>
            <person name="Payseur B.A."/>
            <person name="Bourque G."/>
            <person name="Lopez-Otin C."/>
            <person name="Puente X.S."/>
            <person name="Chakrabarti K."/>
            <person name="Chatterji S."/>
            <person name="Dewey C."/>
            <person name="Pachter L."/>
            <person name="Bray N."/>
            <person name="Yap V.B."/>
            <person name="Caspi A."/>
            <person name="Tesler G."/>
            <person name="Pevzner P.A."/>
            <person name="Haussler D."/>
            <person name="Roskin K.M."/>
            <person name="Baertsch R."/>
            <person name="Clawson H."/>
            <person name="Furey T.S."/>
            <person name="Hinrichs A.S."/>
            <person name="Karolchik D."/>
            <person name="Kent W.J."/>
            <person name="Rosenbloom K.R."/>
            <person name="Trumbower H."/>
            <person name="Weirauch M."/>
            <person name="Cooper D.N."/>
            <person name="Stenson P.D."/>
            <person name="Ma B."/>
            <person name="Brent M."/>
            <person name="Arumugam M."/>
            <person name="Shteynberg D."/>
            <person name="Copley R.R."/>
            <person name="Taylor M.S."/>
            <person name="Riethman H."/>
            <person name="Mudunuri U."/>
            <person name="Peterson J."/>
            <person name="Guyer M."/>
            <person name="Felsenfeld A."/>
            <person name="Old S."/>
            <person name="Mockrin S."/>
            <person name="Collins F.S."/>
        </authorList>
    </citation>
    <scope>NUCLEOTIDE SEQUENCE [LARGE SCALE GENOMIC DNA]</scope>
    <source>
        <strain>Brown Norway</strain>
    </source>
</reference>
<keyword id="KW-0007">Acetylation</keyword>
<keyword id="KW-0175">Coiled coil</keyword>
<keyword id="KW-0963">Cytoplasm</keyword>
<keyword id="KW-0597">Phosphoprotein</keyword>
<keyword id="KW-1185">Reference proteome</keyword>
<sequence>MAELTALESLIEMGFPRGRAEKALALTGNQGIEAAMDWLMEHEDDPDVDEPLETPLSHILGREPTPSEQVGPEGSGSAAGESKPVLTEEERQEQTKRMLELVAQKQREREEREEREALEREKQRRRQGQELSAARQKLQEDEIRRAAEERRREKAEELAARQRVREKIERDKAERAQKYGGTVGSRSSPPATDPGPVPSSPRQEPPTKREYDQCRIQVRLPDGTSLTQTFRAREQLAAVRLYVELHRGEEPGQDQDPVQLLSGFPRRAFSEADMERPLQELGLVPSAVLIVAKKCPS</sequence>
<evidence type="ECO:0000250" key="1"/>
<evidence type="ECO:0000250" key="2">
    <source>
        <dbReference type="UniProtKB" id="Q04323"/>
    </source>
</evidence>
<evidence type="ECO:0000255" key="3"/>
<evidence type="ECO:0000255" key="4">
    <source>
        <dbReference type="PROSITE-ProRule" id="PRU00212"/>
    </source>
</evidence>
<evidence type="ECO:0000255" key="5">
    <source>
        <dbReference type="PROSITE-ProRule" id="PRU00215"/>
    </source>
</evidence>
<evidence type="ECO:0000256" key="6">
    <source>
        <dbReference type="SAM" id="MobiDB-lite"/>
    </source>
</evidence>
<name>UBXN1_RAT</name>
<accession>Q499N6</accession>
<dbReference type="EMBL" id="AABR03002578">
    <property type="status" value="NOT_ANNOTATED_CDS"/>
    <property type="molecule type" value="Genomic_DNA"/>
</dbReference>
<dbReference type="RefSeq" id="NP_001030001.2">
    <property type="nucleotide sequence ID" value="NM_001034829.2"/>
</dbReference>
<dbReference type="RefSeq" id="XP_006231037.2">
    <property type="nucleotide sequence ID" value="XM_006230975.2"/>
</dbReference>
<dbReference type="SMR" id="Q499N6"/>
<dbReference type="FunCoup" id="Q499N6">
    <property type="interactions" value="3151"/>
</dbReference>
<dbReference type="IntAct" id="Q499N6">
    <property type="interactions" value="1"/>
</dbReference>
<dbReference type="STRING" id="10116.ENSRNOP00000026651"/>
<dbReference type="GlyGen" id="Q499N6">
    <property type="glycosylation" value="1 site"/>
</dbReference>
<dbReference type="iPTMnet" id="Q499N6"/>
<dbReference type="PhosphoSitePlus" id="Q499N6"/>
<dbReference type="jPOST" id="Q499N6"/>
<dbReference type="PaxDb" id="10116-ENSRNOP00000026651"/>
<dbReference type="GeneID" id="293719"/>
<dbReference type="UCSC" id="RGD:1309471">
    <property type="organism name" value="rat"/>
</dbReference>
<dbReference type="AGR" id="RGD:1309471"/>
<dbReference type="RGD" id="1309471">
    <property type="gene designation" value="Ubxn1"/>
</dbReference>
<dbReference type="VEuPathDB" id="HostDB:ENSRNOG00000019666"/>
<dbReference type="eggNOG" id="KOG2689">
    <property type="taxonomic scope" value="Eukaryota"/>
</dbReference>
<dbReference type="HOGENOM" id="CLU_047594_1_0_1"/>
<dbReference type="InParanoid" id="Q499N6"/>
<dbReference type="PhylomeDB" id="Q499N6"/>
<dbReference type="TreeFam" id="TF313944"/>
<dbReference type="Reactome" id="R-RNO-532668">
    <property type="pathway name" value="N-glycan trimming in the ER and Calnexin/Calreticulin cycle"/>
</dbReference>
<dbReference type="Reactome" id="R-RNO-5693565">
    <property type="pathway name" value="Recruitment and ATM-mediated phosphorylation of repair and signaling proteins at DNA double strand breaks"/>
</dbReference>
<dbReference type="PRO" id="PR:Q499N6"/>
<dbReference type="Proteomes" id="UP000002494">
    <property type="component" value="Chromosome 1"/>
</dbReference>
<dbReference type="Bgee" id="ENSRNOG00000019666">
    <property type="expression patterns" value="Expressed in quadriceps femoris and 20 other cell types or tissues"/>
</dbReference>
<dbReference type="GO" id="GO:0005737">
    <property type="term" value="C:cytoplasm"/>
    <property type="evidence" value="ECO:0000266"/>
    <property type="project" value="RGD"/>
</dbReference>
<dbReference type="GO" id="GO:0005829">
    <property type="term" value="C:cytosol"/>
    <property type="evidence" value="ECO:0000266"/>
    <property type="project" value="RGD"/>
</dbReference>
<dbReference type="GO" id="GO:0030425">
    <property type="term" value="C:dendrite"/>
    <property type="evidence" value="ECO:0000314"/>
    <property type="project" value="RGD"/>
</dbReference>
<dbReference type="GO" id="GO:0005783">
    <property type="term" value="C:endoplasmic reticulum"/>
    <property type="evidence" value="ECO:0000266"/>
    <property type="project" value="RGD"/>
</dbReference>
<dbReference type="GO" id="GO:0043025">
    <property type="term" value="C:neuronal cell body"/>
    <property type="evidence" value="ECO:0000314"/>
    <property type="project" value="RGD"/>
</dbReference>
<dbReference type="GO" id="GO:0005634">
    <property type="term" value="C:nucleus"/>
    <property type="evidence" value="ECO:0000318"/>
    <property type="project" value="GO_Central"/>
</dbReference>
<dbReference type="GO" id="GO:0034098">
    <property type="term" value="C:VCP-NPL4-UFD1 AAA ATPase complex"/>
    <property type="evidence" value="ECO:0000266"/>
    <property type="project" value="RGD"/>
</dbReference>
<dbReference type="GO" id="GO:0051117">
    <property type="term" value="F:ATPase binding"/>
    <property type="evidence" value="ECO:0000266"/>
    <property type="project" value="RGD"/>
</dbReference>
<dbReference type="GO" id="GO:0036435">
    <property type="term" value="F:K48-linked polyubiquitin modification-dependent protein binding"/>
    <property type="evidence" value="ECO:0000266"/>
    <property type="project" value="RGD"/>
</dbReference>
<dbReference type="GO" id="GO:0071796">
    <property type="term" value="F:K6-linked polyubiquitin modification-dependent protein binding"/>
    <property type="evidence" value="ECO:0000250"/>
    <property type="project" value="UniProtKB"/>
</dbReference>
<dbReference type="GO" id="GO:0031593">
    <property type="term" value="F:polyubiquitin modification-dependent protein binding"/>
    <property type="evidence" value="ECO:0000266"/>
    <property type="project" value="RGD"/>
</dbReference>
<dbReference type="GO" id="GO:1904855">
    <property type="term" value="F:proteasome regulatory particle binding"/>
    <property type="evidence" value="ECO:0000266"/>
    <property type="project" value="RGD"/>
</dbReference>
<dbReference type="GO" id="GO:0043130">
    <property type="term" value="F:ubiquitin binding"/>
    <property type="evidence" value="ECO:0000266"/>
    <property type="project" value="RGD"/>
</dbReference>
<dbReference type="GO" id="GO:0031625">
    <property type="term" value="F:ubiquitin protein ligase binding"/>
    <property type="evidence" value="ECO:0000266"/>
    <property type="project" value="RGD"/>
</dbReference>
<dbReference type="GO" id="GO:1904293">
    <property type="term" value="P:negative regulation of ERAD pathway"/>
    <property type="evidence" value="ECO:0000266"/>
    <property type="project" value="RGD"/>
</dbReference>
<dbReference type="GO" id="GO:0032435">
    <property type="term" value="P:negative regulation of proteasomal ubiquitin-dependent protein catabolic process"/>
    <property type="evidence" value="ECO:0000250"/>
    <property type="project" value="UniProtKB"/>
</dbReference>
<dbReference type="GO" id="GO:1903094">
    <property type="term" value="P:negative regulation of protein K48-linked deubiquitination"/>
    <property type="evidence" value="ECO:0000266"/>
    <property type="project" value="RGD"/>
</dbReference>
<dbReference type="GO" id="GO:0031397">
    <property type="term" value="P:negative regulation of protein ubiquitination"/>
    <property type="evidence" value="ECO:0000250"/>
    <property type="project" value="UniProtKB"/>
</dbReference>
<dbReference type="CDD" id="cd14302">
    <property type="entry name" value="UBA_UBXN1"/>
    <property type="match status" value="1"/>
</dbReference>
<dbReference type="CDD" id="cd01772">
    <property type="entry name" value="UBX_UBXN1"/>
    <property type="match status" value="1"/>
</dbReference>
<dbReference type="FunFam" id="1.10.8.10:FF:000044">
    <property type="entry name" value="UBX domain-containing protein 1"/>
    <property type="match status" value="1"/>
</dbReference>
<dbReference type="FunFam" id="3.10.20.90:FF:000134">
    <property type="entry name" value="UBX domain-containing protein 1"/>
    <property type="match status" value="1"/>
</dbReference>
<dbReference type="Gene3D" id="1.10.8.10">
    <property type="entry name" value="DNA helicase RuvA subunit, C-terminal domain"/>
    <property type="match status" value="2"/>
</dbReference>
<dbReference type="Gene3D" id="3.10.20.90">
    <property type="entry name" value="Phosphatidylinositol 3-kinase Catalytic Subunit, Chain A, domain 1"/>
    <property type="match status" value="1"/>
</dbReference>
<dbReference type="InterPro" id="IPR015940">
    <property type="entry name" value="UBA"/>
</dbReference>
<dbReference type="InterPro" id="IPR009060">
    <property type="entry name" value="UBA-like_sf"/>
</dbReference>
<dbReference type="InterPro" id="IPR041923">
    <property type="entry name" value="UBA_UBXN1"/>
</dbReference>
<dbReference type="InterPro" id="IPR029071">
    <property type="entry name" value="Ubiquitin-like_domsf"/>
</dbReference>
<dbReference type="InterPro" id="IPR001012">
    <property type="entry name" value="UBX_dom"/>
</dbReference>
<dbReference type="PANTHER" id="PTHR46340">
    <property type="entry name" value="UBX DOMAIN-CONTAINING PROTEIN 1"/>
    <property type="match status" value="1"/>
</dbReference>
<dbReference type="PANTHER" id="PTHR46340:SF1">
    <property type="entry name" value="UBX DOMAIN-CONTAINING PROTEIN 1"/>
    <property type="match status" value="1"/>
</dbReference>
<dbReference type="Pfam" id="PF22562">
    <property type="entry name" value="UBA_7"/>
    <property type="match status" value="1"/>
</dbReference>
<dbReference type="Pfam" id="PF00789">
    <property type="entry name" value="UBX"/>
    <property type="match status" value="1"/>
</dbReference>
<dbReference type="SMART" id="SM00165">
    <property type="entry name" value="UBA"/>
    <property type="match status" value="1"/>
</dbReference>
<dbReference type="SMART" id="SM00166">
    <property type="entry name" value="UBX"/>
    <property type="match status" value="1"/>
</dbReference>
<dbReference type="SUPFAM" id="SSF46934">
    <property type="entry name" value="UBA-like"/>
    <property type="match status" value="1"/>
</dbReference>
<dbReference type="SUPFAM" id="SSF54236">
    <property type="entry name" value="Ubiquitin-like"/>
    <property type="match status" value="1"/>
</dbReference>
<dbReference type="PROSITE" id="PS50030">
    <property type="entry name" value="UBA"/>
    <property type="match status" value="1"/>
</dbReference>
<dbReference type="PROSITE" id="PS50033">
    <property type="entry name" value="UBX"/>
    <property type="match status" value="1"/>
</dbReference>